<sequence>MAEIKNYTLNFGPQHPAAHGVLRLVLELDGEVIQRADPHIGLLHRATEKLAENKTFIQSVPYMDRLDYVSMMVNEHGYVLAIEKLLGIEVPERAQYIRVLFDEITRVLNHLMWIGAHALDVGAMAVFLYAFREREDLMDVYEAVSGARMHAAYYRPGGVYRDLPEAMPQYKASKIRNERALAKMNEARSGSVLDFIDDFFTRFPKCVDEYETLLTDNRIWKQRLVGIGVVSPERALQLGLTGPMIRGSGIAWDLRKKQPYEVYDRLDFDIPVGVNGDCYDRYLVRVEEMRQSTRIAKQCIEWLRKNPGPVITDNHKVAPPSRVGMKTNMEDLIHHFKLFTEGFHVPEGETYAAVEHPKGEFGIYLVSDGANKPYRLKIRAPGYAHLSALDEMARGHMIADAVTIIGTQDIVFGEIDR</sequence>
<dbReference type="EC" id="7.1.1.-" evidence="1"/>
<dbReference type="EMBL" id="CP000572">
    <property type="protein sequence ID" value="ABN90527.1"/>
    <property type="molecule type" value="Genomic_DNA"/>
</dbReference>
<dbReference type="RefSeq" id="WP_004185833.1">
    <property type="nucleotide sequence ID" value="NC_009076.1"/>
</dbReference>
<dbReference type="SMR" id="A3NTA9"/>
<dbReference type="KEGG" id="bpl:BURPS1106A_1302"/>
<dbReference type="HOGENOM" id="CLU_015134_1_1_4"/>
<dbReference type="Proteomes" id="UP000006738">
    <property type="component" value="Chromosome I"/>
</dbReference>
<dbReference type="GO" id="GO:0005886">
    <property type="term" value="C:plasma membrane"/>
    <property type="evidence" value="ECO:0007669"/>
    <property type="project" value="UniProtKB-SubCell"/>
</dbReference>
<dbReference type="GO" id="GO:0051287">
    <property type="term" value="F:NAD binding"/>
    <property type="evidence" value="ECO:0007669"/>
    <property type="project" value="InterPro"/>
</dbReference>
<dbReference type="GO" id="GO:0050136">
    <property type="term" value="F:NADH:ubiquinone reductase (non-electrogenic) activity"/>
    <property type="evidence" value="ECO:0007669"/>
    <property type="project" value="UniProtKB-UniRule"/>
</dbReference>
<dbReference type="GO" id="GO:0048038">
    <property type="term" value="F:quinone binding"/>
    <property type="evidence" value="ECO:0007669"/>
    <property type="project" value="UniProtKB-KW"/>
</dbReference>
<dbReference type="FunFam" id="1.10.645.10:FF:000005">
    <property type="entry name" value="NADH-quinone oxidoreductase subunit D"/>
    <property type="match status" value="1"/>
</dbReference>
<dbReference type="Gene3D" id="1.10.645.10">
    <property type="entry name" value="Cytochrome-c3 Hydrogenase, chain B"/>
    <property type="match status" value="1"/>
</dbReference>
<dbReference type="HAMAP" id="MF_01358">
    <property type="entry name" value="NDH1_NuoD"/>
    <property type="match status" value="1"/>
</dbReference>
<dbReference type="InterPro" id="IPR001135">
    <property type="entry name" value="NADH_Q_OxRdtase_suD"/>
</dbReference>
<dbReference type="InterPro" id="IPR014029">
    <property type="entry name" value="NADH_UbQ_OxRdtase_49kDa_CS"/>
</dbReference>
<dbReference type="InterPro" id="IPR022885">
    <property type="entry name" value="NDH1_su_D/H"/>
</dbReference>
<dbReference type="InterPro" id="IPR029014">
    <property type="entry name" value="NiFe-Hase_large"/>
</dbReference>
<dbReference type="NCBIfam" id="TIGR01962">
    <property type="entry name" value="NuoD"/>
    <property type="match status" value="1"/>
</dbReference>
<dbReference type="NCBIfam" id="NF004739">
    <property type="entry name" value="PRK06075.1"/>
    <property type="match status" value="1"/>
</dbReference>
<dbReference type="PANTHER" id="PTHR11993:SF10">
    <property type="entry name" value="NADH DEHYDROGENASE [UBIQUINONE] IRON-SULFUR PROTEIN 2, MITOCHONDRIAL"/>
    <property type="match status" value="1"/>
</dbReference>
<dbReference type="PANTHER" id="PTHR11993">
    <property type="entry name" value="NADH-UBIQUINONE OXIDOREDUCTASE 49 KDA SUBUNIT"/>
    <property type="match status" value="1"/>
</dbReference>
<dbReference type="Pfam" id="PF00346">
    <property type="entry name" value="Complex1_49kDa"/>
    <property type="match status" value="1"/>
</dbReference>
<dbReference type="SUPFAM" id="SSF56762">
    <property type="entry name" value="HydB/Nqo4-like"/>
    <property type="match status" value="1"/>
</dbReference>
<dbReference type="PROSITE" id="PS00535">
    <property type="entry name" value="COMPLEX1_49K"/>
    <property type="match status" value="1"/>
</dbReference>
<proteinExistence type="inferred from homology"/>
<name>NUOD_BURP0</name>
<comment type="function">
    <text evidence="1">NDH-1 shuttles electrons from NADH, via FMN and iron-sulfur (Fe-S) centers, to quinones in the respiratory chain. The immediate electron acceptor for the enzyme in this species is believed to be ubiquinone. Couples the redox reaction to proton translocation (for every two electrons transferred, four hydrogen ions are translocated across the cytoplasmic membrane), and thus conserves the redox energy in a proton gradient.</text>
</comment>
<comment type="catalytic activity">
    <reaction evidence="1">
        <text>a quinone + NADH + 5 H(+)(in) = a quinol + NAD(+) + 4 H(+)(out)</text>
        <dbReference type="Rhea" id="RHEA:57888"/>
        <dbReference type="ChEBI" id="CHEBI:15378"/>
        <dbReference type="ChEBI" id="CHEBI:24646"/>
        <dbReference type="ChEBI" id="CHEBI:57540"/>
        <dbReference type="ChEBI" id="CHEBI:57945"/>
        <dbReference type="ChEBI" id="CHEBI:132124"/>
    </reaction>
</comment>
<comment type="subunit">
    <text evidence="1">NDH-1 is composed of 14 different subunits. Subunits NuoB, C, D, E, F, and G constitute the peripheral sector of the complex.</text>
</comment>
<comment type="subcellular location">
    <subcellularLocation>
        <location evidence="1">Cell inner membrane</location>
        <topology evidence="1">Peripheral membrane protein</topology>
        <orientation evidence="1">Cytoplasmic side</orientation>
    </subcellularLocation>
</comment>
<comment type="similarity">
    <text evidence="1">Belongs to the complex I 49 kDa subunit family.</text>
</comment>
<evidence type="ECO:0000255" key="1">
    <source>
        <dbReference type="HAMAP-Rule" id="MF_01358"/>
    </source>
</evidence>
<gene>
    <name evidence="1" type="primary">nuoD</name>
    <name type="ordered locus">BURPS1106A_1302</name>
</gene>
<accession>A3NTA9</accession>
<protein>
    <recommendedName>
        <fullName evidence="1">NADH-quinone oxidoreductase subunit D</fullName>
        <ecNumber evidence="1">7.1.1.-</ecNumber>
    </recommendedName>
    <alternativeName>
        <fullName evidence="1">NADH dehydrogenase I subunit D</fullName>
    </alternativeName>
    <alternativeName>
        <fullName evidence="1">NDH-1 subunit D</fullName>
    </alternativeName>
</protein>
<organism>
    <name type="scientific">Burkholderia pseudomallei (strain 1106a)</name>
    <dbReference type="NCBI Taxonomy" id="357348"/>
    <lineage>
        <taxon>Bacteria</taxon>
        <taxon>Pseudomonadati</taxon>
        <taxon>Pseudomonadota</taxon>
        <taxon>Betaproteobacteria</taxon>
        <taxon>Burkholderiales</taxon>
        <taxon>Burkholderiaceae</taxon>
        <taxon>Burkholderia</taxon>
        <taxon>pseudomallei group</taxon>
    </lineage>
</organism>
<keyword id="KW-0997">Cell inner membrane</keyword>
<keyword id="KW-1003">Cell membrane</keyword>
<keyword id="KW-0472">Membrane</keyword>
<keyword id="KW-0520">NAD</keyword>
<keyword id="KW-0874">Quinone</keyword>
<keyword id="KW-1278">Translocase</keyword>
<keyword id="KW-0813">Transport</keyword>
<keyword id="KW-0830">Ubiquinone</keyword>
<feature type="chain" id="PRO_0000371836" description="NADH-quinone oxidoreductase subunit D">
    <location>
        <begin position="1"/>
        <end position="417"/>
    </location>
</feature>
<reference key="1">
    <citation type="journal article" date="2010" name="Genome Biol. Evol.">
        <title>Continuing evolution of Burkholderia mallei through genome reduction and large-scale rearrangements.</title>
        <authorList>
            <person name="Losada L."/>
            <person name="Ronning C.M."/>
            <person name="DeShazer D."/>
            <person name="Woods D."/>
            <person name="Fedorova N."/>
            <person name="Kim H.S."/>
            <person name="Shabalina S.A."/>
            <person name="Pearson T.R."/>
            <person name="Brinkac L."/>
            <person name="Tan P."/>
            <person name="Nandi T."/>
            <person name="Crabtree J."/>
            <person name="Badger J."/>
            <person name="Beckstrom-Sternberg S."/>
            <person name="Saqib M."/>
            <person name="Schutzer S.E."/>
            <person name="Keim P."/>
            <person name="Nierman W.C."/>
        </authorList>
    </citation>
    <scope>NUCLEOTIDE SEQUENCE [LARGE SCALE GENOMIC DNA]</scope>
    <source>
        <strain>1106a</strain>
    </source>
</reference>